<gene>
    <name type="primary">RPL7</name>
    <name type="ordered locus">AFL082W</name>
</gene>
<feature type="chain" id="PRO_0000104642" description="Large ribosomal subunit protein uL30">
    <location>
        <begin position="1"/>
        <end position="243"/>
    </location>
</feature>
<feature type="region of interest" description="Disordered" evidence="1">
    <location>
        <begin position="1"/>
        <end position="31"/>
    </location>
</feature>
<feature type="compositionally biased region" description="Low complexity" evidence="1">
    <location>
        <begin position="18"/>
        <end position="28"/>
    </location>
</feature>
<dbReference type="EMBL" id="AE016819">
    <property type="protein sequence ID" value="AAS53290.1"/>
    <property type="molecule type" value="Genomic_DNA"/>
</dbReference>
<dbReference type="RefSeq" id="NP_985466.1">
    <property type="nucleotide sequence ID" value="NM_210820.1"/>
</dbReference>
<dbReference type="SMR" id="Q755A7"/>
<dbReference type="FunCoup" id="Q755A7">
    <property type="interactions" value="1517"/>
</dbReference>
<dbReference type="STRING" id="284811.Q755A7"/>
<dbReference type="EnsemblFungi" id="AAS53290">
    <property type="protein sequence ID" value="AAS53290"/>
    <property type="gene ID" value="AGOS_AFL082W"/>
</dbReference>
<dbReference type="GeneID" id="4621694"/>
<dbReference type="KEGG" id="ago:AGOS_AFL082W"/>
<dbReference type="eggNOG" id="KOG3184">
    <property type="taxonomic scope" value="Eukaryota"/>
</dbReference>
<dbReference type="HOGENOM" id="CLU_055156_0_2_1"/>
<dbReference type="InParanoid" id="Q755A7"/>
<dbReference type="OMA" id="SYYVDAQ"/>
<dbReference type="OrthoDB" id="28644at2759"/>
<dbReference type="Proteomes" id="UP000000591">
    <property type="component" value="Chromosome VI"/>
</dbReference>
<dbReference type="GO" id="GO:0022625">
    <property type="term" value="C:cytosolic large ribosomal subunit"/>
    <property type="evidence" value="ECO:0000318"/>
    <property type="project" value="GO_Central"/>
</dbReference>
<dbReference type="GO" id="GO:0003723">
    <property type="term" value="F:RNA binding"/>
    <property type="evidence" value="ECO:0000318"/>
    <property type="project" value="GO_Central"/>
</dbReference>
<dbReference type="GO" id="GO:0003735">
    <property type="term" value="F:structural constituent of ribosome"/>
    <property type="evidence" value="ECO:0000318"/>
    <property type="project" value="GO_Central"/>
</dbReference>
<dbReference type="GO" id="GO:0000463">
    <property type="term" value="P:maturation of LSU-rRNA from tricistronic rRNA transcript (SSU-rRNA, 5.8S rRNA, LSU-rRNA)"/>
    <property type="evidence" value="ECO:0000318"/>
    <property type="project" value="GO_Central"/>
</dbReference>
<dbReference type="CDD" id="cd01657">
    <property type="entry name" value="Ribosomal_L7_archeal_euk"/>
    <property type="match status" value="1"/>
</dbReference>
<dbReference type="FunFam" id="3.30.1390.20:FF:000002">
    <property type="entry name" value="60S ribosomal protein L7"/>
    <property type="match status" value="1"/>
</dbReference>
<dbReference type="FunFam" id="3.30.1390.20:FF:000003">
    <property type="entry name" value="60S ribosomal protein L7"/>
    <property type="match status" value="1"/>
</dbReference>
<dbReference type="Gene3D" id="3.30.1390.20">
    <property type="entry name" value="Ribosomal protein L30, ferredoxin-like fold domain"/>
    <property type="match status" value="2"/>
</dbReference>
<dbReference type="InterPro" id="IPR036919">
    <property type="entry name" value="Ribo_uL30_ferredoxin-like_sf"/>
</dbReference>
<dbReference type="InterPro" id="IPR039699">
    <property type="entry name" value="Ribosomal_uL30"/>
</dbReference>
<dbReference type="InterPro" id="IPR018038">
    <property type="entry name" value="Ribosomal_uL30_CS"/>
</dbReference>
<dbReference type="InterPro" id="IPR005998">
    <property type="entry name" value="Ribosomal_uL30_euk"/>
</dbReference>
<dbReference type="InterPro" id="IPR035808">
    <property type="entry name" value="Ribosomal_uL30_euk_arc"/>
</dbReference>
<dbReference type="InterPro" id="IPR016082">
    <property type="entry name" value="Ribosomal_uL30_ferredoxin-like"/>
</dbReference>
<dbReference type="InterPro" id="IPR012988">
    <property type="entry name" value="Ribosomal_uL30_N_euk"/>
</dbReference>
<dbReference type="NCBIfam" id="TIGR01310">
    <property type="entry name" value="uL30_euk"/>
    <property type="match status" value="1"/>
</dbReference>
<dbReference type="PANTHER" id="PTHR11524">
    <property type="entry name" value="60S RIBOSOMAL PROTEIN L7"/>
    <property type="match status" value="1"/>
</dbReference>
<dbReference type="PANTHER" id="PTHR11524:SF16">
    <property type="entry name" value="LARGE RIBOSOMAL SUBUNIT PROTEIN UL30"/>
    <property type="match status" value="1"/>
</dbReference>
<dbReference type="Pfam" id="PF00327">
    <property type="entry name" value="Ribosomal_L30"/>
    <property type="match status" value="1"/>
</dbReference>
<dbReference type="Pfam" id="PF08079">
    <property type="entry name" value="Ribosomal_L30_N"/>
    <property type="match status" value="1"/>
</dbReference>
<dbReference type="SUPFAM" id="SSF55129">
    <property type="entry name" value="Ribosomal protein L30p/L7e"/>
    <property type="match status" value="1"/>
</dbReference>
<dbReference type="PROSITE" id="PS00634">
    <property type="entry name" value="RIBOSOMAL_L30"/>
    <property type="match status" value="1"/>
</dbReference>
<protein>
    <recommendedName>
        <fullName evidence="2">Large ribosomal subunit protein uL30</fullName>
    </recommendedName>
    <alternativeName>
        <fullName>60S ribosomal protein L7</fullName>
    </alternativeName>
</protein>
<accession>Q755A7</accession>
<name>RL7_EREGS</name>
<evidence type="ECO:0000256" key="1">
    <source>
        <dbReference type="SAM" id="MobiDB-lite"/>
    </source>
</evidence>
<evidence type="ECO:0000305" key="2"/>
<reference key="1">
    <citation type="journal article" date="2004" name="Science">
        <title>The Ashbya gossypii genome as a tool for mapping the ancient Saccharomyces cerevisiae genome.</title>
        <authorList>
            <person name="Dietrich F.S."/>
            <person name="Voegeli S."/>
            <person name="Brachat S."/>
            <person name="Lerch A."/>
            <person name="Gates K."/>
            <person name="Steiner S."/>
            <person name="Mohr C."/>
            <person name="Poehlmann R."/>
            <person name="Luedi P."/>
            <person name="Choi S."/>
            <person name="Wing R.A."/>
            <person name="Flavier A."/>
            <person name="Gaffney T.D."/>
            <person name="Philippsen P."/>
        </authorList>
    </citation>
    <scope>NUCLEOTIDE SEQUENCE [LARGE SCALE GENOMIC DNA]</scope>
    <source>
        <strain>ATCC 10895 / CBS 109.51 / FGSC 9923 / NRRL Y-1056</strain>
    </source>
</reference>
<reference key="2">
    <citation type="journal article" date="2013" name="G3 (Bethesda)">
        <title>Genomes of Ashbya fungi isolated from insects reveal four mating-type loci, numerous translocations, lack of transposons, and distinct gene duplications.</title>
        <authorList>
            <person name="Dietrich F.S."/>
            <person name="Voegeli S."/>
            <person name="Kuo S."/>
            <person name="Philippsen P."/>
        </authorList>
    </citation>
    <scope>GENOME REANNOTATION</scope>
    <source>
        <strain>ATCC 10895 / CBS 109.51 / FGSC 9923 / NRRL Y-1056</strain>
    </source>
</reference>
<comment type="similarity">
    <text evidence="2">Belongs to the universal ribosomal protein uL30 family.</text>
</comment>
<sequence>MADKILTPESQLKKSKAQQKSAEQVAAERAARKAANKEKRAAILERNAAYHKEYETAERAVIQAKREAKANGSYYVESQPKLVFVIRIKGINKIAPKPRKVLQLLRLNQINSGVFVKVTKATTELLRLVEPYVAYGYPSYSTIRQLVYKRGYGKINKQRIALSENSIVEANLGKYGIISVDDLIHEIITVGPHFKQANNFLWPFKLSNPSGGWGVPRKFKHFIQGGAFGNREEFINKLVKSMN</sequence>
<proteinExistence type="inferred from homology"/>
<keyword id="KW-1185">Reference proteome</keyword>
<keyword id="KW-0687">Ribonucleoprotein</keyword>
<keyword id="KW-0689">Ribosomal protein</keyword>
<organism>
    <name type="scientific">Eremothecium gossypii (strain ATCC 10895 / CBS 109.51 / FGSC 9923 / NRRL Y-1056)</name>
    <name type="common">Yeast</name>
    <name type="synonym">Ashbya gossypii</name>
    <dbReference type="NCBI Taxonomy" id="284811"/>
    <lineage>
        <taxon>Eukaryota</taxon>
        <taxon>Fungi</taxon>
        <taxon>Dikarya</taxon>
        <taxon>Ascomycota</taxon>
        <taxon>Saccharomycotina</taxon>
        <taxon>Saccharomycetes</taxon>
        <taxon>Saccharomycetales</taxon>
        <taxon>Saccharomycetaceae</taxon>
        <taxon>Eremothecium</taxon>
    </lineage>
</organism>